<organism>
    <name type="scientific">Synechococcus elongatus (strain ATCC 33912 / PCC 7942 / FACHB-805)</name>
    <name type="common">Anacystis nidulans R2</name>
    <dbReference type="NCBI Taxonomy" id="1140"/>
    <lineage>
        <taxon>Bacteria</taxon>
        <taxon>Bacillati</taxon>
        <taxon>Cyanobacteriota</taxon>
        <taxon>Cyanophyceae</taxon>
        <taxon>Synechococcales</taxon>
        <taxon>Synechococcaceae</taxon>
        <taxon>Synechococcus</taxon>
    </lineage>
</organism>
<gene>
    <name type="ordered locus">Synpcc7942_1390</name>
</gene>
<protein>
    <recommendedName>
        <fullName>Uncharacterized HIT-like protein Synpcc7942_1390</fullName>
    </recommendedName>
    <alternativeName>
        <fullName>ORF 1</fullName>
    </alternativeName>
</protein>
<proteinExistence type="predicted"/>
<feature type="chain" id="PRO_0000109828" description="Uncharacterized HIT-like protein Synpcc7942_1390">
    <location>
        <begin position="1"/>
        <end position="114"/>
    </location>
</feature>
<feature type="domain" description="HIT" evidence="1">
    <location>
        <begin position="6"/>
        <end position="114"/>
    </location>
</feature>
<feature type="short sequence motif" description="Histidine triad motif">
    <location>
        <begin position="98"/>
        <end position="102"/>
    </location>
</feature>
<accession>P32084</accession>
<accession>Q31NE9</accession>
<reference key="1">
    <citation type="journal article" date="1990" name="J. Bacteriol.">
        <title>Different and rapid responses of four cyanobacterial psbA transcripts to changes in light intensity.</title>
        <authorList>
            <person name="Bustos S.A."/>
            <person name="Schaefer M.R."/>
            <person name="Golden S.S."/>
        </authorList>
    </citation>
    <scope>NUCLEOTIDE SEQUENCE [GENOMIC DNA]</scope>
</reference>
<reference key="2">
    <citation type="submission" date="2005-08" db="EMBL/GenBank/DDBJ databases">
        <title>Complete sequence of chromosome 1 of Synechococcus elongatus PCC 7942.</title>
        <authorList>
            <consortium name="US DOE Joint Genome Institute"/>
            <person name="Copeland A."/>
            <person name="Lucas S."/>
            <person name="Lapidus A."/>
            <person name="Barry K."/>
            <person name="Detter J.C."/>
            <person name="Glavina T."/>
            <person name="Hammon N."/>
            <person name="Israni S."/>
            <person name="Pitluck S."/>
            <person name="Schmutz J."/>
            <person name="Larimer F."/>
            <person name="Land M."/>
            <person name="Kyrpides N."/>
            <person name="Lykidis A."/>
            <person name="Golden S."/>
            <person name="Richardson P."/>
        </authorList>
    </citation>
    <scope>NUCLEOTIDE SEQUENCE [LARGE SCALE GENOMIC DNA]</scope>
    <source>
        <strain>ATCC 33912 / PCC 7942 / FACHB-805</strain>
    </source>
</reference>
<reference key="3">
    <citation type="journal article" date="1992" name="DNA Seq.">
        <title>The HIT protein family: a new family of proteins present in prokaryotes, yeast and mammals.</title>
        <authorList>
            <person name="Seraphin B."/>
        </authorList>
    </citation>
    <scope>SIMILARITY TO OTHER MEMBERS OF THE HIT FAMILY</scope>
</reference>
<dbReference type="EMBL" id="M34833">
    <property type="protein sequence ID" value="AAA27360.1"/>
    <property type="molecule type" value="Genomic_DNA"/>
</dbReference>
<dbReference type="EMBL" id="CP000100">
    <property type="protein sequence ID" value="ABB57420.1"/>
    <property type="molecule type" value="Genomic_DNA"/>
</dbReference>
<dbReference type="RefSeq" id="WP_011378015.1">
    <property type="nucleotide sequence ID" value="NZ_JACJTX010000004.1"/>
</dbReference>
<dbReference type="SMR" id="P32084"/>
<dbReference type="STRING" id="1140.Synpcc7942_1390"/>
<dbReference type="PaxDb" id="1140-Synpcc7942_1390"/>
<dbReference type="KEGG" id="syf:Synpcc7942_1390"/>
<dbReference type="eggNOG" id="COG0537">
    <property type="taxonomic scope" value="Bacteria"/>
</dbReference>
<dbReference type="HOGENOM" id="CLU_056776_8_1_3"/>
<dbReference type="OrthoDB" id="9784774at2"/>
<dbReference type="BioCyc" id="SYNEL:SYNPCC7942_1390-MONOMER"/>
<dbReference type="Proteomes" id="UP000889800">
    <property type="component" value="Chromosome"/>
</dbReference>
<dbReference type="GO" id="GO:0003824">
    <property type="term" value="F:catalytic activity"/>
    <property type="evidence" value="ECO:0007669"/>
    <property type="project" value="InterPro"/>
</dbReference>
<dbReference type="CDD" id="cd01276">
    <property type="entry name" value="PKCI_related"/>
    <property type="match status" value="1"/>
</dbReference>
<dbReference type="FunFam" id="3.30.428.10:FF:000005">
    <property type="entry name" value="Histidine triad nucleotide-binding protein 1"/>
    <property type="match status" value="1"/>
</dbReference>
<dbReference type="Gene3D" id="3.30.428.10">
    <property type="entry name" value="HIT-like"/>
    <property type="match status" value="1"/>
</dbReference>
<dbReference type="InterPro" id="IPR019808">
    <property type="entry name" value="Histidine_triad_CS"/>
</dbReference>
<dbReference type="InterPro" id="IPR001310">
    <property type="entry name" value="Histidine_triad_HIT"/>
</dbReference>
<dbReference type="InterPro" id="IPR011146">
    <property type="entry name" value="HIT-like"/>
</dbReference>
<dbReference type="InterPro" id="IPR036265">
    <property type="entry name" value="HIT-like_sf"/>
</dbReference>
<dbReference type="PANTHER" id="PTHR23089">
    <property type="entry name" value="HISTIDINE TRIAD HIT PROTEIN"/>
    <property type="match status" value="1"/>
</dbReference>
<dbReference type="Pfam" id="PF01230">
    <property type="entry name" value="HIT"/>
    <property type="match status" value="1"/>
</dbReference>
<dbReference type="PRINTS" id="PR00332">
    <property type="entry name" value="HISTRIAD"/>
</dbReference>
<dbReference type="SUPFAM" id="SSF54197">
    <property type="entry name" value="HIT-like"/>
    <property type="match status" value="1"/>
</dbReference>
<dbReference type="PROSITE" id="PS00892">
    <property type="entry name" value="HIT_1"/>
    <property type="match status" value="1"/>
</dbReference>
<dbReference type="PROSITE" id="PS51084">
    <property type="entry name" value="HIT_2"/>
    <property type="match status" value="1"/>
</dbReference>
<keyword id="KW-1185">Reference proteome</keyword>
<sequence>MSEDTIFGKIIRREIPADIVYEDDLCLAFRDVAPQAPVHILVIPKQPIANLLEATAEHQALLGHLLLTVKAIAAQEGLTEGYRTVINTGPAGGQTVYHLHIHLLGGRSLAWPPG</sequence>
<evidence type="ECO:0000255" key="1">
    <source>
        <dbReference type="PROSITE-ProRule" id="PRU00464"/>
    </source>
</evidence>
<name>Y1390_SYNE7</name>